<sequence>MEHLNQEQKAAVTCDNGVNVVYSGAGTGKTTVIAERFAYLVNEKGVNPQSILAFTFTDKAASEMRQRIIKLIPQKSLQDLHIYTFHSFANRFLQKHGKSDFAILSDSNRFFSDYEMGDQLQTVVEIYKNKVVDLELDNLEYNSAFRDACTDTFNEDFSTISNGQFRKRAATALRAYQNYLITNNLFDFSDLIIETCHLLKGNSELLQAFTESVHYILVDEFQDTNLAQYELVKLLATTHPNLFLVGDSNQMIYGWRGAVVEIFELLKNDFQAVKEFYTTQNYRSIQAVLAVANDVLTAIARKERKALVLLHSSIDSKAVPVHYKANSLKNQDQWIIYQMKQLHLNNGVPYDQMAVLFRKNKHLDAFSQTVLEDGDLPLAKLNLLTIHAAKGLEFEAVFVYGLVERAFPSLHWDGSDKHKLLEEMKLFYVAITRAKQFLFLVSVSVESFNAYYEPSRFLKLIEKEHLQTQKAAYFKEQLKTQPKPVNLYTETENAENLQKATDSKKWIILGAILLIIVIITAVLKLFVEN</sequence>
<accession>P75438</accession>
<comment type="catalytic activity">
    <reaction>
        <text>Couples ATP hydrolysis with the unwinding of duplex DNA by translocating in the 3'-5' direction.</text>
        <dbReference type="EC" id="5.6.2.4"/>
    </reaction>
</comment>
<comment type="catalytic activity">
    <reaction>
        <text>ATP + H2O = ADP + phosphate + H(+)</text>
        <dbReference type="Rhea" id="RHEA:13065"/>
        <dbReference type="ChEBI" id="CHEBI:15377"/>
        <dbReference type="ChEBI" id="CHEBI:15378"/>
        <dbReference type="ChEBI" id="CHEBI:30616"/>
        <dbReference type="ChEBI" id="CHEBI:43474"/>
        <dbReference type="ChEBI" id="CHEBI:456216"/>
        <dbReference type="EC" id="5.6.2.4"/>
    </reaction>
</comment>
<comment type="similarity">
    <text evidence="2">Belongs to the helicase family. UvrD subfamily.</text>
</comment>
<evidence type="ECO:0000255" key="1">
    <source>
        <dbReference type="PROSITE-ProRule" id="PRU00560"/>
    </source>
</evidence>
<evidence type="ECO:0000305" key="2"/>
<protein>
    <recommendedName>
        <fullName>Probable DNA helicase MPN_340</fullName>
        <ecNumber>5.6.2.4</ecNumber>
    </recommendedName>
    <alternativeName>
        <fullName evidence="2">DNA 3'-5' helicase MPN_340</fullName>
    </alternativeName>
</protein>
<organism>
    <name type="scientific">Mycoplasma pneumoniae (strain ATCC 29342 / M129 / Subtype 1)</name>
    <name type="common">Mycoplasmoides pneumoniae</name>
    <dbReference type="NCBI Taxonomy" id="272634"/>
    <lineage>
        <taxon>Bacteria</taxon>
        <taxon>Bacillati</taxon>
        <taxon>Mycoplasmatota</taxon>
        <taxon>Mycoplasmoidales</taxon>
        <taxon>Mycoplasmoidaceae</taxon>
        <taxon>Mycoplasmoides</taxon>
    </lineage>
</organism>
<gene>
    <name type="ordered locus">MPN_340</name>
    <name type="ORF">H91_orf529</name>
    <name type="ORF">MP496</name>
</gene>
<feature type="chain" id="PRO_0000102082" description="Probable DNA helicase MPN_340">
    <location>
        <begin position="1"/>
        <end position="529"/>
    </location>
</feature>
<feature type="domain" description="UvrD-like helicase ATP-binding" evidence="1">
    <location>
        <begin position="2"/>
        <end position="285"/>
    </location>
</feature>
<feature type="binding site" evidence="1">
    <location>
        <begin position="23"/>
        <end position="30"/>
    </location>
    <ligand>
        <name>ATP</name>
        <dbReference type="ChEBI" id="CHEBI:30616"/>
    </ligand>
</feature>
<proteinExistence type="inferred from homology"/>
<name>Y340_MYCPN</name>
<dbReference type="EC" id="5.6.2.4"/>
<dbReference type="EMBL" id="U00089">
    <property type="protein sequence ID" value="AAB96144.1"/>
    <property type="molecule type" value="Genomic_DNA"/>
</dbReference>
<dbReference type="PIR" id="S73822">
    <property type="entry name" value="S73822"/>
</dbReference>
<dbReference type="RefSeq" id="NP_110028.1">
    <property type="nucleotide sequence ID" value="NC_000912.1"/>
</dbReference>
<dbReference type="RefSeq" id="WP_010874696.1">
    <property type="nucleotide sequence ID" value="NC_000912.1"/>
</dbReference>
<dbReference type="SMR" id="P75438"/>
<dbReference type="IntAct" id="P75438">
    <property type="interactions" value="4"/>
</dbReference>
<dbReference type="STRING" id="272634.MPN_340"/>
<dbReference type="EnsemblBacteria" id="AAB96144">
    <property type="protein sequence ID" value="AAB96144"/>
    <property type="gene ID" value="MPN_340"/>
</dbReference>
<dbReference type="KEGG" id="mpn:MPN_340"/>
<dbReference type="PATRIC" id="fig|272634.6.peg.364"/>
<dbReference type="HOGENOM" id="CLU_004585_6_1_14"/>
<dbReference type="OrthoDB" id="9810135at2"/>
<dbReference type="BioCyc" id="MPNE272634:G1GJ3-537-MONOMER"/>
<dbReference type="Proteomes" id="UP000000808">
    <property type="component" value="Chromosome"/>
</dbReference>
<dbReference type="GO" id="GO:0005829">
    <property type="term" value="C:cytosol"/>
    <property type="evidence" value="ECO:0007669"/>
    <property type="project" value="TreeGrafter"/>
</dbReference>
<dbReference type="GO" id="GO:0033202">
    <property type="term" value="C:DNA helicase complex"/>
    <property type="evidence" value="ECO:0007669"/>
    <property type="project" value="TreeGrafter"/>
</dbReference>
<dbReference type="GO" id="GO:0043138">
    <property type="term" value="F:3'-5' DNA helicase activity"/>
    <property type="evidence" value="ECO:0007669"/>
    <property type="project" value="TreeGrafter"/>
</dbReference>
<dbReference type="GO" id="GO:0005524">
    <property type="term" value="F:ATP binding"/>
    <property type="evidence" value="ECO:0007669"/>
    <property type="project" value="UniProtKB-KW"/>
</dbReference>
<dbReference type="GO" id="GO:0016887">
    <property type="term" value="F:ATP hydrolysis activity"/>
    <property type="evidence" value="ECO:0007669"/>
    <property type="project" value="RHEA"/>
</dbReference>
<dbReference type="GO" id="GO:0003677">
    <property type="term" value="F:DNA binding"/>
    <property type="evidence" value="ECO:0007669"/>
    <property type="project" value="UniProtKB-KW"/>
</dbReference>
<dbReference type="GO" id="GO:0000725">
    <property type="term" value="P:recombinational repair"/>
    <property type="evidence" value="ECO:0007669"/>
    <property type="project" value="TreeGrafter"/>
</dbReference>
<dbReference type="CDD" id="cd17932">
    <property type="entry name" value="DEXQc_UvrD"/>
    <property type="match status" value="1"/>
</dbReference>
<dbReference type="CDD" id="cd18807">
    <property type="entry name" value="SF1_C_UvrD"/>
    <property type="match status" value="1"/>
</dbReference>
<dbReference type="Gene3D" id="1.10.10.160">
    <property type="match status" value="1"/>
</dbReference>
<dbReference type="Gene3D" id="3.40.50.300">
    <property type="entry name" value="P-loop containing nucleotide triphosphate hydrolases"/>
    <property type="match status" value="2"/>
</dbReference>
<dbReference type="InterPro" id="IPR013986">
    <property type="entry name" value="DExx_box_DNA_helicase_dom_sf"/>
</dbReference>
<dbReference type="InterPro" id="IPR014017">
    <property type="entry name" value="DNA_helicase_UvrD-like_C"/>
</dbReference>
<dbReference type="InterPro" id="IPR000212">
    <property type="entry name" value="DNA_helicase_UvrD/REP"/>
</dbReference>
<dbReference type="InterPro" id="IPR027417">
    <property type="entry name" value="P-loop_NTPase"/>
</dbReference>
<dbReference type="InterPro" id="IPR014016">
    <property type="entry name" value="UvrD-like_ATP-bd"/>
</dbReference>
<dbReference type="PANTHER" id="PTHR11070:SF2">
    <property type="entry name" value="ATP-DEPENDENT DNA HELICASE SRS2"/>
    <property type="match status" value="1"/>
</dbReference>
<dbReference type="PANTHER" id="PTHR11070">
    <property type="entry name" value="UVRD / RECB / PCRA DNA HELICASE FAMILY MEMBER"/>
    <property type="match status" value="1"/>
</dbReference>
<dbReference type="Pfam" id="PF00580">
    <property type="entry name" value="UvrD-helicase"/>
    <property type="match status" value="1"/>
</dbReference>
<dbReference type="Pfam" id="PF13361">
    <property type="entry name" value="UvrD_C"/>
    <property type="match status" value="2"/>
</dbReference>
<dbReference type="SUPFAM" id="SSF52540">
    <property type="entry name" value="P-loop containing nucleoside triphosphate hydrolases"/>
    <property type="match status" value="1"/>
</dbReference>
<dbReference type="PROSITE" id="PS51198">
    <property type="entry name" value="UVRD_HELICASE_ATP_BIND"/>
    <property type="match status" value="1"/>
</dbReference>
<reference key="1">
    <citation type="journal article" date="1996" name="Nucleic Acids Res.">
        <title>Complete sequence analysis of the genome of the bacterium Mycoplasma pneumoniae.</title>
        <authorList>
            <person name="Himmelreich R."/>
            <person name="Hilbert H."/>
            <person name="Plagens H."/>
            <person name="Pirkl E."/>
            <person name="Li B.-C."/>
            <person name="Herrmann R."/>
        </authorList>
    </citation>
    <scope>NUCLEOTIDE SEQUENCE [LARGE SCALE GENOMIC DNA]</scope>
    <source>
        <strain>ATCC 29342 / M129 / Subtype 1</strain>
    </source>
</reference>
<keyword id="KW-0067">ATP-binding</keyword>
<keyword id="KW-0238">DNA-binding</keyword>
<keyword id="KW-0347">Helicase</keyword>
<keyword id="KW-0378">Hydrolase</keyword>
<keyword id="KW-0413">Isomerase</keyword>
<keyword id="KW-0547">Nucleotide-binding</keyword>
<keyword id="KW-1185">Reference proteome</keyword>